<gene>
    <name evidence="3" type="primary">TPS1E</name>
</gene>
<comment type="function">
    <text evidence="2">Terpene synthase that catalyzes the biosynthesis of the terpene valerianol, which is a volatile compound of floral scent.</text>
</comment>
<comment type="catalytic activity">
    <reaction evidence="2">
        <text>(2E,6E)-farnesyl diphosphate + H2O = valerianol + diphosphate</text>
        <dbReference type="Rhea" id="RHEA:60424"/>
        <dbReference type="ChEBI" id="CHEBI:15377"/>
        <dbReference type="ChEBI" id="CHEBI:33019"/>
        <dbReference type="ChEBI" id="CHEBI:143779"/>
        <dbReference type="ChEBI" id="CHEBI:175763"/>
        <dbReference type="EC" id="4.2.3.204"/>
    </reaction>
    <physiologicalReaction direction="left-to-right" evidence="2">
        <dbReference type="Rhea" id="RHEA:60425"/>
    </physiologicalReaction>
</comment>
<comment type="cofactor">
    <cofactor evidence="1">
        <name>Mg(2+)</name>
        <dbReference type="ChEBI" id="CHEBI:18420"/>
    </cofactor>
    <text evidence="1">Binds 3 Mg(2+) ions per subunit.</text>
</comment>
<comment type="pathway">
    <text evidence="4">Secondary metabolite biosynthesis; terpenoid biosynthesis.</text>
</comment>
<comment type="domain">
    <text evidence="4">The Asp-Asp-Xaa-Xaa-Asp/Glu (DDXXD/E) motif is important for the catalytic activity, presumably through binding to Mg(2+).</text>
</comment>
<comment type="similarity">
    <text evidence="4">Belongs to the terpene synthase family.</text>
</comment>
<reference key="1">
    <citation type="journal article" date="2018" name="Sci. Rep.">
        <title>Identification of novel sesquiterpene synthase genes that mediate the biosynthesis of valerianol, which was an unknown ingredient of tea.</title>
        <authorList>
            <person name="Hattan J."/>
            <person name="Shindo K."/>
            <person name="Sasaki T."/>
            <person name="Ohno F."/>
            <person name="Tokuda H."/>
            <person name="Ishikawa K."/>
            <person name="Misawa N."/>
        </authorList>
    </citation>
    <scope>NUCLEOTIDE SEQUENCE [MRNA]</scope>
</reference>
<feature type="chain" id="PRO_0000451722" description="Valerianol synthase TPS1E">
    <location>
        <begin position="1"/>
        <end position="554"/>
    </location>
</feature>
<feature type="short sequence motif" description="DDXXD motif" evidence="4">
    <location>
        <begin position="326"/>
        <end position="330"/>
    </location>
</feature>
<feature type="binding site" evidence="1">
    <location>
        <position position="307"/>
    </location>
    <ligand>
        <name>Mg(2+)</name>
        <dbReference type="ChEBI" id="CHEBI:18420"/>
        <label>1</label>
    </ligand>
</feature>
<feature type="binding site" evidence="1">
    <location>
        <position position="307"/>
    </location>
    <ligand>
        <name>Mg(2+)</name>
        <dbReference type="ChEBI" id="CHEBI:18420"/>
        <label>2</label>
    </ligand>
</feature>
<feature type="binding site" evidence="1">
    <location>
        <position position="311"/>
    </location>
    <ligand>
        <name>Mg(2+)</name>
        <dbReference type="ChEBI" id="CHEBI:18420"/>
        <label>1</label>
    </ligand>
</feature>
<feature type="binding site" evidence="1">
    <location>
        <position position="311"/>
    </location>
    <ligand>
        <name>Mg(2+)</name>
        <dbReference type="ChEBI" id="CHEBI:18420"/>
        <label>2</label>
    </ligand>
</feature>
<feature type="binding site" evidence="1">
    <location>
        <position position="452"/>
    </location>
    <ligand>
        <name>Mg(2+)</name>
        <dbReference type="ChEBI" id="CHEBI:18420"/>
        <label>3</label>
    </ligand>
</feature>
<feature type="binding site" evidence="1">
    <location>
        <position position="456"/>
    </location>
    <ligand>
        <name>Mg(2+)</name>
        <dbReference type="ChEBI" id="CHEBI:18420"/>
        <label>3</label>
    </ligand>
</feature>
<feature type="binding site" evidence="1">
    <location>
        <position position="460"/>
    </location>
    <ligand>
        <name>Mg(2+)</name>
        <dbReference type="ChEBI" id="CHEBI:18420"/>
        <label>3</label>
    </ligand>
</feature>
<keyword id="KW-0456">Lyase</keyword>
<keyword id="KW-0460">Magnesium</keyword>
<keyword id="KW-0479">Metal-binding</keyword>
<proteinExistence type="evidence at transcript level"/>
<protein>
    <recommendedName>
        <fullName evidence="4">Valerianol synthase TPS1E</fullName>
        <ecNumber evidence="2">4.2.3.204</ecNumber>
    </recommendedName>
    <alternativeName>
        <fullName evidence="3">Terpene synthase 1e</fullName>
        <shortName evidence="3">ChTps1e</shortName>
    </alternativeName>
</protein>
<evidence type="ECO:0000250" key="1">
    <source>
        <dbReference type="UniProtKB" id="Q40577"/>
    </source>
</evidence>
<evidence type="ECO:0000269" key="2">
    <source>
    </source>
</evidence>
<evidence type="ECO:0000303" key="3">
    <source>
    </source>
</evidence>
<evidence type="ECO:0000305" key="4"/>
<name>TPS1E_CAMHI</name>
<organism>
    <name type="scientific">Camellia hiemalis</name>
    <name type="common">Camellia</name>
    <dbReference type="NCBI Taxonomy" id="1840584"/>
    <lineage>
        <taxon>Eukaryota</taxon>
        <taxon>Viridiplantae</taxon>
        <taxon>Streptophyta</taxon>
        <taxon>Embryophyta</taxon>
        <taxon>Tracheophyta</taxon>
        <taxon>Spermatophyta</taxon>
        <taxon>Magnoliopsida</taxon>
        <taxon>eudicotyledons</taxon>
        <taxon>Gunneridae</taxon>
        <taxon>Pentapetalae</taxon>
        <taxon>asterids</taxon>
        <taxon>Ericales</taxon>
        <taxon>Theaceae</taxon>
        <taxon>Camellia</taxon>
    </lineage>
</organism>
<accession>A0A348AUV9</accession>
<sequence length="554" mass="64121">MASSQVGDMVNGNAEPTRHLAKFPPSLWGDRFTSFTLDKQLWDKYGNEIEVLKEQVRSMVVAGGRKAAEQINLINVLERLGVSYHFEKEIEEQLEQLFAKFEDNEDYDLFTIALHFRIFRQHGYKMSCDVFNKFRDSNGEFKETMSNDVQGMLSLYEATYLKIRGEGFLDEAHAFTIAQLESLVGGPHLSSDLSEQVMHALKQSIHRGFPRLEAKHFISFYEKDASRNETLLRLAKLDFNQLQLSHREELCHIFRWWKELDLISKVPYARDRAVECFFWSTCAYYEPQHFVGRAVLTKIMLLLSVTDDTYDAYGTYDELKLYTNAVQRWDVSAMDELPDYMKALYRALLNVYDEVERDLAKQGRDYGVHHSKEAFKEIVRSYEIEAEWFKEGYVASFEAYMKNALVTSTGRLHTTSCFMGLEADVATTEAFEWILTKPKMVAASGAIGRLVDDVMSHDEEQERGHVATGLDCYMKQHGVSKQEAIVELYKMIENAWRDINEEILKPTAISMKLLIRVLNLSRISDVVYKYVDGYTHPEIIKDHVISLFEDPIPM</sequence>
<dbReference type="EC" id="4.2.3.204" evidence="2"/>
<dbReference type="EMBL" id="LC212980">
    <property type="protein sequence ID" value="BBC44640.1"/>
    <property type="molecule type" value="mRNA"/>
</dbReference>
<dbReference type="SMR" id="A0A348AUV9"/>
<dbReference type="UniPathway" id="UPA00213"/>
<dbReference type="GO" id="GO:0016838">
    <property type="term" value="F:carbon-oxygen lyase activity, acting on phosphates"/>
    <property type="evidence" value="ECO:0000314"/>
    <property type="project" value="UniProtKB"/>
</dbReference>
<dbReference type="GO" id="GO:0000287">
    <property type="term" value="F:magnesium ion binding"/>
    <property type="evidence" value="ECO:0007669"/>
    <property type="project" value="InterPro"/>
</dbReference>
<dbReference type="GO" id="GO:0010333">
    <property type="term" value="F:terpene synthase activity"/>
    <property type="evidence" value="ECO:0007669"/>
    <property type="project" value="InterPro"/>
</dbReference>
<dbReference type="GO" id="GO:0016102">
    <property type="term" value="P:diterpenoid biosynthetic process"/>
    <property type="evidence" value="ECO:0007669"/>
    <property type="project" value="InterPro"/>
</dbReference>
<dbReference type="GO" id="GO:0016106">
    <property type="term" value="P:sesquiterpenoid biosynthetic process"/>
    <property type="evidence" value="ECO:0000314"/>
    <property type="project" value="UniProtKB"/>
</dbReference>
<dbReference type="CDD" id="cd00684">
    <property type="entry name" value="Terpene_cyclase_plant_C1"/>
    <property type="match status" value="1"/>
</dbReference>
<dbReference type="FunFam" id="1.10.600.10:FF:000007">
    <property type="entry name" value="Isoprene synthase, chloroplastic"/>
    <property type="match status" value="1"/>
</dbReference>
<dbReference type="FunFam" id="1.50.10.130:FF:000001">
    <property type="entry name" value="Isoprene synthase, chloroplastic"/>
    <property type="match status" value="1"/>
</dbReference>
<dbReference type="Gene3D" id="1.10.600.10">
    <property type="entry name" value="Farnesyl Diphosphate Synthase"/>
    <property type="match status" value="1"/>
</dbReference>
<dbReference type="Gene3D" id="1.50.10.130">
    <property type="entry name" value="Terpene synthase, N-terminal domain"/>
    <property type="match status" value="1"/>
</dbReference>
<dbReference type="InterPro" id="IPR008949">
    <property type="entry name" value="Isoprenoid_synthase_dom_sf"/>
</dbReference>
<dbReference type="InterPro" id="IPR034741">
    <property type="entry name" value="Terpene_cyclase-like_1_C"/>
</dbReference>
<dbReference type="InterPro" id="IPR044814">
    <property type="entry name" value="Terpene_cyclase_plant_C1"/>
</dbReference>
<dbReference type="InterPro" id="IPR001906">
    <property type="entry name" value="Terpene_synth_N"/>
</dbReference>
<dbReference type="InterPro" id="IPR036965">
    <property type="entry name" value="Terpene_synth_N_sf"/>
</dbReference>
<dbReference type="InterPro" id="IPR050148">
    <property type="entry name" value="Terpene_synthase-like"/>
</dbReference>
<dbReference type="InterPro" id="IPR005630">
    <property type="entry name" value="Terpene_synthase_metal-bd"/>
</dbReference>
<dbReference type="InterPro" id="IPR008930">
    <property type="entry name" value="Terpenoid_cyclase/PrenylTrfase"/>
</dbReference>
<dbReference type="PANTHER" id="PTHR31225:SF93">
    <property type="entry name" value="ALPHA-HUMULENE_(-)-(E)-BETA-CARYOPHYLLENE SYNTHASE"/>
    <property type="match status" value="1"/>
</dbReference>
<dbReference type="PANTHER" id="PTHR31225">
    <property type="entry name" value="OS04G0344100 PROTEIN-RELATED"/>
    <property type="match status" value="1"/>
</dbReference>
<dbReference type="Pfam" id="PF01397">
    <property type="entry name" value="Terpene_synth"/>
    <property type="match status" value="1"/>
</dbReference>
<dbReference type="Pfam" id="PF03936">
    <property type="entry name" value="Terpene_synth_C"/>
    <property type="match status" value="1"/>
</dbReference>
<dbReference type="SFLD" id="SFLDS00005">
    <property type="entry name" value="Isoprenoid_Synthase_Type_I"/>
    <property type="match status" value="1"/>
</dbReference>
<dbReference type="SFLD" id="SFLDG01019">
    <property type="entry name" value="Terpene_Cyclase_Like_1_C_Termi"/>
    <property type="match status" value="1"/>
</dbReference>
<dbReference type="SUPFAM" id="SSF48239">
    <property type="entry name" value="Terpenoid cyclases/Protein prenyltransferases"/>
    <property type="match status" value="1"/>
</dbReference>
<dbReference type="SUPFAM" id="SSF48576">
    <property type="entry name" value="Terpenoid synthases"/>
    <property type="match status" value="1"/>
</dbReference>